<reference key="1">
    <citation type="journal article" date="2008" name="BMC Genomics">
        <title>The genome sequence of the fish pathogen Aliivibrio salmonicida strain LFI1238 shows extensive evidence of gene decay.</title>
        <authorList>
            <person name="Hjerde E."/>
            <person name="Lorentzen M.S."/>
            <person name="Holden M.T."/>
            <person name="Seeger K."/>
            <person name="Paulsen S."/>
            <person name="Bason N."/>
            <person name="Churcher C."/>
            <person name="Harris D."/>
            <person name="Norbertczak H."/>
            <person name="Quail M.A."/>
            <person name="Sanders S."/>
            <person name="Thurston S."/>
            <person name="Parkhill J."/>
            <person name="Willassen N.P."/>
            <person name="Thomson N.R."/>
        </authorList>
    </citation>
    <scope>NUCLEOTIDE SEQUENCE [LARGE SCALE GENOMIC DNA]</scope>
    <source>
        <strain>LFI1238</strain>
    </source>
</reference>
<protein>
    <recommendedName>
        <fullName evidence="1">Fe/S biogenesis protein NfuA</fullName>
    </recommendedName>
</protein>
<sequence>MTSINITESAQEHFAKLLAQQPEGTNIRVFVVNPGTQNAECGVSYCPPEAIEANDTELKFENLSAYVDELSLPFLEDADIDYVTDKMGSQLTLKAPNAKMRKVNDDAPLFERVEYAIQTQVNPQLAGHGGHVSLMEITEAGIAIVQFGGGCNGCSMVDVTLKEGIEKELLAQFEGELTAVKDLTEHDRGEHSYY</sequence>
<dbReference type="EMBL" id="FM178379">
    <property type="protein sequence ID" value="CAQ80595.1"/>
    <property type="molecule type" value="Genomic_DNA"/>
</dbReference>
<dbReference type="RefSeq" id="WP_012551328.1">
    <property type="nucleotide sequence ID" value="NC_011312.1"/>
</dbReference>
<dbReference type="SMR" id="B6ENV8"/>
<dbReference type="KEGG" id="vsa:VSAL_I2911"/>
<dbReference type="eggNOG" id="COG0316">
    <property type="taxonomic scope" value="Bacteria"/>
</dbReference>
<dbReference type="eggNOG" id="COG0694">
    <property type="taxonomic scope" value="Bacteria"/>
</dbReference>
<dbReference type="HOGENOM" id="CLU_094569_0_0_6"/>
<dbReference type="Proteomes" id="UP000001730">
    <property type="component" value="Chromosome 1"/>
</dbReference>
<dbReference type="GO" id="GO:0051539">
    <property type="term" value="F:4 iron, 4 sulfur cluster binding"/>
    <property type="evidence" value="ECO:0007669"/>
    <property type="project" value="UniProtKB-UniRule"/>
</dbReference>
<dbReference type="GO" id="GO:0005506">
    <property type="term" value="F:iron ion binding"/>
    <property type="evidence" value="ECO:0007669"/>
    <property type="project" value="InterPro"/>
</dbReference>
<dbReference type="GO" id="GO:0016226">
    <property type="term" value="P:iron-sulfur cluster assembly"/>
    <property type="evidence" value="ECO:0007669"/>
    <property type="project" value="UniProtKB-UniRule"/>
</dbReference>
<dbReference type="GO" id="GO:0051604">
    <property type="term" value="P:protein maturation"/>
    <property type="evidence" value="ECO:0007669"/>
    <property type="project" value="UniProtKB-UniRule"/>
</dbReference>
<dbReference type="Gene3D" id="3.30.300.130">
    <property type="entry name" value="Fe-S cluster assembly (FSCA)"/>
    <property type="match status" value="1"/>
</dbReference>
<dbReference type="Gene3D" id="2.60.300.12">
    <property type="entry name" value="HesB-like domain"/>
    <property type="match status" value="1"/>
</dbReference>
<dbReference type="HAMAP" id="MF_01637">
    <property type="entry name" value="Fe_S_biogen_NfuA"/>
    <property type="match status" value="1"/>
</dbReference>
<dbReference type="InterPro" id="IPR017726">
    <property type="entry name" value="Fe/S_biogenesis_protein_NfuA"/>
</dbReference>
<dbReference type="InterPro" id="IPR000361">
    <property type="entry name" value="FeS_biogenesis"/>
</dbReference>
<dbReference type="InterPro" id="IPR034904">
    <property type="entry name" value="FSCA_dom_sf"/>
</dbReference>
<dbReference type="InterPro" id="IPR035903">
    <property type="entry name" value="HesB-like_dom_sf"/>
</dbReference>
<dbReference type="InterPro" id="IPR001075">
    <property type="entry name" value="NIF_FeS_clus_asmbl_NifU_C"/>
</dbReference>
<dbReference type="NCBIfam" id="NF008392">
    <property type="entry name" value="PRK11190.1"/>
    <property type="match status" value="1"/>
</dbReference>
<dbReference type="NCBIfam" id="TIGR03341">
    <property type="entry name" value="YhgI_GntY"/>
    <property type="match status" value="1"/>
</dbReference>
<dbReference type="PANTHER" id="PTHR11178:SF51">
    <property type="entry name" value="FE_S BIOGENESIS PROTEIN NFUA"/>
    <property type="match status" value="1"/>
</dbReference>
<dbReference type="PANTHER" id="PTHR11178">
    <property type="entry name" value="IRON-SULFUR CLUSTER SCAFFOLD PROTEIN NFU-RELATED"/>
    <property type="match status" value="1"/>
</dbReference>
<dbReference type="Pfam" id="PF01521">
    <property type="entry name" value="Fe-S_biosyn"/>
    <property type="match status" value="1"/>
</dbReference>
<dbReference type="Pfam" id="PF01106">
    <property type="entry name" value="NifU"/>
    <property type="match status" value="1"/>
</dbReference>
<dbReference type="SUPFAM" id="SSF117916">
    <property type="entry name" value="Fe-S cluster assembly (FSCA) domain-like"/>
    <property type="match status" value="1"/>
</dbReference>
<dbReference type="SUPFAM" id="SSF89360">
    <property type="entry name" value="HesB-like domain"/>
    <property type="match status" value="1"/>
</dbReference>
<accession>B6ENV8</accession>
<proteinExistence type="inferred from homology"/>
<keyword id="KW-0004">4Fe-4S</keyword>
<keyword id="KW-0408">Iron</keyword>
<keyword id="KW-0411">Iron-sulfur</keyword>
<keyword id="KW-0479">Metal-binding</keyword>
<organism>
    <name type="scientific">Aliivibrio salmonicida (strain LFI1238)</name>
    <name type="common">Vibrio salmonicida (strain LFI1238)</name>
    <dbReference type="NCBI Taxonomy" id="316275"/>
    <lineage>
        <taxon>Bacteria</taxon>
        <taxon>Pseudomonadati</taxon>
        <taxon>Pseudomonadota</taxon>
        <taxon>Gammaproteobacteria</taxon>
        <taxon>Vibrionales</taxon>
        <taxon>Vibrionaceae</taxon>
        <taxon>Aliivibrio</taxon>
    </lineage>
</organism>
<name>NFUA_ALISL</name>
<comment type="function">
    <text evidence="1">Involved in iron-sulfur cluster biogenesis. Binds a 4Fe-4S cluster, can transfer this cluster to apoproteins, and thereby intervenes in the maturation of Fe/S proteins. Could also act as a scaffold/chaperone for damaged Fe/S proteins.</text>
</comment>
<comment type="cofactor">
    <cofactor evidence="1">
        <name>[4Fe-4S] cluster</name>
        <dbReference type="ChEBI" id="CHEBI:49883"/>
    </cofactor>
    <text evidence="1">Binds 1 [4Fe-4S] cluster per subunit. The cluster is presumably bound at the interface of two monomers.</text>
</comment>
<comment type="subunit">
    <text evidence="1">Homodimer.</text>
</comment>
<comment type="similarity">
    <text evidence="1">Belongs to the NfuA family.</text>
</comment>
<feature type="chain" id="PRO_1000186735" description="Fe/S biogenesis protein NfuA">
    <location>
        <begin position="1"/>
        <end position="194"/>
    </location>
</feature>
<feature type="binding site" evidence="1">
    <location>
        <position position="151"/>
    </location>
    <ligand>
        <name>[4Fe-4S] cluster</name>
        <dbReference type="ChEBI" id="CHEBI:49883"/>
    </ligand>
</feature>
<feature type="binding site" evidence="1">
    <location>
        <position position="154"/>
    </location>
    <ligand>
        <name>[4Fe-4S] cluster</name>
        <dbReference type="ChEBI" id="CHEBI:49883"/>
    </ligand>
</feature>
<evidence type="ECO:0000255" key="1">
    <source>
        <dbReference type="HAMAP-Rule" id="MF_01637"/>
    </source>
</evidence>
<gene>
    <name evidence="1" type="primary">nfuA</name>
    <name type="ordered locus">VSAL_I2911</name>
</gene>